<reference key="1">
    <citation type="submission" date="2007-08" db="EMBL/GenBank/DDBJ databases">
        <authorList>
            <consortium name="The Citrobacter koseri Genome Sequencing Project"/>
            <person name="McClelland M."/>
            <person name="Sanderson E.K."/>
            <person name="Porwollik S."/>
            <person name="Spieth J."/>
            <person name="Clifton W.S."/>
            <person name="Latreille P."/>
            <person name="Courtney L."/>
            <person name="Wang C."/>
            <person name="Pepin K."/>
            <person name="Bhonagiri V."/>
            <person name="Nash W."/>
            <person name="Johnson M."/>
            <person name="Thiruvilangam P."/>
            <person name="Wilson R."/>
        </authorList>
    </citation>
    <scope>NUCLEOTIDE SEQUENCE [LARGE SCALE GENOMIC DNA]</scope>
    <source>
        <strain>ATCC BAA-895 / CDC 4225-83 / SGSC4696</strain>
    </source>
</reference>
<protein>
    <recommendedName>
        <fullName evidence="1">Arginine repressor</fullName>
    </recommendedName>
</protein>
<sequence>MRSSAKQEELVKAFKALLKEEKFSSQGEIVLALQDQGFDNINQSKVSRMLTKFGAVRTRNAKMEMVYCLPAELGVPTTSSPLKNLVLDIDYNDAVVVIHTSPGAAQLIARLLDSLGKAEGILGTIAGDDTIFTTPANGFTVKDLYEAILELFEQEL</sequence>
<gene>
    <name evidence="1" type="primary">argR</name>
    <name type="ordered locus">CKO_04642</name>
</gene>
<feature type="chain" id="PRO_1000023554" description="Arginine repressor">
    <location>
        <begin position="1"/>
        <end position="156"/>
    </location>
</feature>
<dbReference type="EMBL" id="CP000822">
    <property type="protein sequence ID" value="ABV15692.1"/>
    <property type="molecule type" value="Genomic_DNA"/>
</dbReference>
<dbReference type="RefSeq" id="WP_012135369.1">
    <property type="nucleotide sequence ID" value="NC_009792.1"/>
</dbReference>
<dbReference type="SMR" id="A8AQC9"/>
<dbReference type="STRING" id="290338.CKO_04642"/>
<dbReference type="GeneID" id="84234921"/>
<dbReference type="KEGG" id="cko:CKO_04642"/>
<dbReference type="HOGENOM" id="CLU_097103_2_0_6"/>
<dbReference type="OrthoDB" id="7060358at2"/>
<dbReference type="UniPathway" id="UPA00068"/>
<dbReference type="Proteomes" id="UP000008148">
    <property type="component" value="Chromosome"/>
</dbReference>
<dbReference type="GO" id="GO:0005737">
    <property type="term" value="C:cytoplasm"/>
    <property type="evidence" value="ECO:0007669"/>
    <property type="project" value="UniProtKB-SubCell"/>
</dbReference>
<dbReference type="GO" id="GO:0034618">
    <property type="term" value="F:arginine binding"/>
    <property type="evidence" value="ECO:0007669"/>
    <property type="project" value="InterPro"/>
</dbReference>
<dbReference type="GO" id="GO:0003677">
    <property type="term" value="F:DNA binding"/>
    <property type="evidence" value="ECO:0007669"/>
    <property type="project" value="UniProtKB-KW"/>
</dbReference>
<dbReference type="GO" id="GO:0003700">
    <property type="term" value="F:DNA-binding transcription factor activity"/>
    <property type="evidence" value="ECO:0007669"/>
    <property type="project" value="UniProtKB-UniRule"/>
</dbReference>
<dbReference type="GO" id="GO:0006526">
    <property type="term" value="P:L-arginine biosynthetic process"/>
    <property type="evidence" value="ECO:0007669"/>
    <property type="project" value="UniProtKB-UniPathway"/>
</dbReference>
<dbReference type="GO" id="GO:0051259">
    <property type="term" value="P:protein complex oligomerization"/>
    <property type="evidence" value="ECO:0007669"/>
    <property type="project" value="InterPro"/>
</dbReference>
<dbReference type="GO" id="GO:1900079">
    <property type="term" value="P:regulation of arginine biosynthetic process"/>
    <property type="evidence" value="ECO:0007669"/>
    <property type="project" value="UniProtKB-UniRule"/>
</dbReference>
<dbReference type="FunFam" id="1.10.10.10:FF:000074">
    <property type="entry name" value="Arginine repressor"/>
    <property type="match status" value="1"/>
</dbReference>
<dbReference type="FunFam" id="3.30.1360.40:FF:000004">
    <property type="entry name" value="Arginine repressor"/>
    <property type="match status" value="1"/>
</dbReference>
<dbReference type="Gene3D" id="3.30.1360.40">
    <property type="match status" value="1"/>
</dbReference>
<dbReference type="Gene3D" id="1.10.10.10">
    <property type="entry name" value="Winged helix-like DNA-binding domain superfamily/Winged helix DNA-binding domain"/>
    <property type="match status" value="1"/>
</dbReference>
<dbReference type="HAMAP" id="MF_00173">
    <property type="entry name" value="Arg_repressor"/>
    <property type="match status" value="1"/>
</dbReference>
<dbReference type="InterPro" id="IPR001669">
    <property type="entry name" value="Arg_repress"/>
</dbReference>
<dbReference type="InterPro" id="IPR020899">
    <property type="entry name" value="Arg_repress_C"/>
</dbReference>
<dbReference type="InterPro" id="IPR036251">
    <property type="entry name" value="Arg_repress_C_sf"/>
</dbReference>
<dbReference type="InterPro" id="IPR020900">
    <property type="entry name" value="Arg_repress_DNA-bd"/>
</dbReference>
<dbReference type="InterPro" id="IPR036388">
    <property type="entry name" value="WH-like_DNA-bd_sf"/>
</dbReference>
<dbReference type="InterPro" id="IPR036390">
    <property type="entry name" value="WH_DNA-bd_sf"/>
</dbReference>
<dbReference type="NCBIfam" id="TIGR01529">
    <property type="entry name" value="argR_whole"/>
    <property type="match status" value="1"/>
</dbReference>
<dbReference type="NCBIfam" id="NF003457">
    <property type="entry name" value="PRK05066.1"/>
    <property type="match status" value="1"/>
</dbReference>
<dbReference type="PANTHER" id="PTHR34471">
    <property type="entry name" value="ARGININE REPRESSOR"/>
    <property type="match status" value="1"/>
</dbReference>
<dbReference type="PANTHER" id="PTHR34471:SF1">
    <property type="entry name" value="ARGININE REPRESSOR"/>
    <property type="match status" value="1"/>
</dbReference>
<dbReference type="Pfam" id="PF01316">
    <property type="entry name" value="Arg_repressor"/>
    <property type="match status" value="1"/>
</dbReference>
<dbReference type="Pfam" id="PF02863">
    <property type="entry name" value="Arg_repressor_C"/>
    <property type="match status" value="1"/>
</dbReference>
<dbReference type="PRINTS" id="PR01467">
    <property type="entry name" value="ARGREPRESSOR"/>
</dbReference>
<dbReference type="SUPFAM" id="SSF55252">
    <property type="entry name" value="C-terminal domain of arginine repressor"/>
    <property type="match status" value="1"/>
</dbReference>
<dbReference type="SUPFAM" id="SSF46785">
    <property type="entry name" value="Winged helix' DNA-binding domain"/>
    <property type="match status" value="1"/>
</dbReference>
<accession>A8AQC9</accession>
<organism>
    <name type="scientific">Citrobacter koseri (strain ATCC BAA-895 / CDC 4225-83 / SGSC4696)</name>
    <dbReference type="NCBI Taxonomy" id="290338"/>
    <lineage>
        <taxon>Bacteria</taxon>
        <taxon>Pseudomonadati</taxon>
        <taxon>Pseudomonadota</taxon>
        <taxon>Gammaproteobacteria</taxon>
        <taxon>Enterobacterales</taxon>
        <taxon>Enterobacteriaceae</taxon>
        <taxon>Citrobacter</taxon>
    </lineage>
</organism>
<evidence type="ECO:0000255" key="1">
    <source>
        <dbReference type="HAMAP-Rule" id="MF_00173"/>
    </source>
</evidence>
<comment type="function">
    <text evidence="1">Regulates arginine biosynthesis genes.</text>
</comment>
<comment type="pathway">
    <text>Amino-acid biosynthesis; L-arginine biosynthesis [regulation].</text>
</comment>
<comment type="subcellular location">
    <subcellularLocation>
        <location evidence="1">Cytoplasm</location>
    </subcellularLocation>
</comment>
<comment type="similarity">
    <text evidence="1">Belongs to the ArgR family.</text>
</comment>
<proteinExistence type="inferred from homology"/>
<keyword id="KW-0028">Amino-acid biosynthesis</keyword>
<keyword id="KW-0055">Arginine biosynthesis</keyword>
<keyword id="KW-0963">Cytoplasm</keyword>
<keyword id="KW-0238">DNA-binding</keyword>
<keyword id="KW-1185">Reference proteome</keyword>
<keyword id="KW-0678">Repressor</keyword>
<keyword id="KW-0804">Transcription</keyword>
<keyword id="KW-0805">Transcription regulation</keyword>
<name>ARGR_CITK8</name>